<protein>
    <recommendedName>
        <fullName evidence="1">Putative pyruvate, phosphate dikinase regulatory protein</fullName>
        <shortName evidence="1">PPDK regulatory protein</shortName>
        <ecNumber evidence="1">2.7.11.32</ecNumber>
        <ecNumber evidence="1">2.7.4.27</ecNumber>
    </recommendedName>
</protein>
<comment type="function">
    <text evidence="1">Bifunctional serine/threonine kinase and phosphorylase involved in the regulation of the pyruvate, phosphate dikinase (PPDK) by catalyzing its phosphorylation/dephosphorylation.</text>
</comment>
<comment type="catalytic activity">
    <reaction evidence="1">
        <text>N(tele)-phospho-L-histidyl/L-threonyl-[pyruvate, phosphate dikinase] + ADP = N(tele)-phospho-L-histidyl/O-phospho-L-threonyl-[pyruvate, phosphate dikinase] + AMP + H(+)</text>
        <dbReference type="Rhea" id="RHEA:43692"/>
        <dbReference type="Rhea" id="RHEA-COMP:10650"/>
        <dbReference type="Rhea" id="RHEA-COMP:10651"/>
        <dbReference type="ChEBI" id="CHEBI:15378"/>
        <dbReference type="ChEBI" id="CHEBI:30013"/>
        <dbReference type="ChEBI" id="CHEBI:61977"/>
        <dbReference type="ChEBI" id="CHEBI:83586"/>
        <dbReference type="ChEBI" id="CHEBI:456215"/>
        <dbReference type="ChEBI" id="CHEBI:456216"/>
        <dbReference type="EC" id="2.7.11.32"/>
    </reaction>
</comment>
<comment type="catalytic activity">
    <reaction evidence="1">
        <text>N(tele)-phospho-L-histidyl/O-phospho-L-threonyl-[pyruvate, phosphate dikinase] + phosphate + H(+) = N(tele)-phospho-L-histidyl/L-threonyl-[pyruvate, phosphate dikinase] + diphosphate</text>
        <dbReference type="Rhea" id="RHEA:43696"/>
        <dbReference type="Rhea" id="RHEA-COMP:10650"/>
        <dbReference type="Rhea" id="RHEA-COMP:10651"/>
        <dbReference type="ChEBI" id="CHEBI:15378"/>
        <dbReference type="ChEBI" id="CHEBI:30013"/>
        <dbReference type="ChEBI" id="CHEBI:33019"/>
        <dbReference type="ChEBI" id="CHEBI:43474"/>
        <dbReference type="ChEBI" id="CHEBI:61977"/>
        <dbReference type="ChEBI" id="CHEBI:83586"/>
        <dbReference type="EC" id="2.7.4.27"/>
    </reaction>
</comment>
<comment type="similarity">
    <text evidence="1">Belongs to the pyruvate, phosphate/water dikinase regulatory protein family. PDRP subfamily.</text>
</comment>
<gene>
    <name type="ordered locus">CLB_3704</name>
</gene>
<name>PDRP_CLOB1</name>
<proteinExistence type="inferred from homology"/>
<reference key="1">
    <citation type="journal article" date="2007" name="PLoS ONE">
        <title>Analysis of the neurotoxin complex genes in Clostridium botulinum A1-A4 and B1 strains: BoNT/A3, /Ba4 and /B1 clusters are located within plasmids.</title>
        <authorList>
            <person name="Smith T.J."/>
            <person name="Hill K.K."/>
            <person name="Foley B.T."/>
            <person name="Detter J.C."/>
            <person name="Munk A.C."/>
            <person name="Bruce D.C."/>
            <person name="Doggett N.A."/>
            <person name="Smith L.A."/>
            <person name="Marks J.D."/>
            <person name="Xie G."/>
            <person name="Brettin T.S."/>
        </authorList>
    </citation>
    <scope>NUCLEOTIDE SEQUENCE [LARGE SCALE GENOMIC DNA]</scope>
    <source>
        <strain>ATCC 19397 / Type A</strain>
    </source>
</reference>
<accession>A7FZF4</accession>
<dbReference type="EC" id="2.7.11.32" evidence="1"/>
<dbReference type="EC" id="2.7.4.27" evidence="1"/>
<dbReference type="EMBL" id="CP000726">
    <property type="protein sequence ID" value="ABS34708.1"/>
    <property type="molecule type" value="Genomic_DNA"/>
</dbReference>
<dbReference type="RefSeq" id="WP_003359375.1">
    <property type="nucleotide sequence ID" value="NC_009697.1"/>
</dbReference>
<dbReference type="SMR" id="A7FZF4"/>
<dbReference type="KEGG" id="cba:CLB_3704"/>
<dbReference type="HOGENOM" id="CLU_046206_2_1_9"/>
<dbReference type="GO" id="GO:0043531">
    <property type="term" value="F:ADP binding"/>
    <property type="evidence" value="ECO:0007669"/>
    <property type="project" value="UniProtKB-UniRule"/>
</dbReference>
<dbReference type="GO" id="GO:0005524">
    <property type="term" value="F:ATP binding"/>
    <property type="evidence" value="ECO:0007669"/>
    <property type="project" value="InterPro"/>
</dbReference>
<dbReference type="GO" id="GO:0016776">
    <property type="term" value="F:phosphotransferase activity, phosphate group as acceptor"/>
    <property type="evidence" value="ECO:0007669"/>
    <property type="project" value="UniProtKB-UniRule"/>
</dbReference>
<dbReference type="GO" id="GO:0004674">
    <property type="term" value="F:protein serine/threonine kinase activity"/>
    <property type="evidence" value="ECO:0007669"/>
    <property type="project" value="UniProtKB-UniRule"/>
</dbReference>
<dbReference type="HAMAP" id="MF_00921">
    <property type="entry name" value="PDRP"/>
    <property type="match status" value="1"/>
</dbReference>
<dbReference type="InterPro" id="IPR005177">
    <property type="entry name" value="Kinase-pyrophosphorylase"/>
</dbReference>
<dbReference type="InterPro" id="IPR026565">
    <property type="entry name" value="PPDK_reg"/>
</dbReference>
<dbReference type="NCBIfam" id="NF003742">
    <property type="entry name" value="PRK05339.1"/>
    <property type="match status" value="1"/>
</dbReference>
<dbReference type="PANTHER" id="PTHR31756">
    <property type="entry name" value="PYRUVATE, PHOSPHATE DIKINASE REGULATORY PROTEIN 1, CHLOROPLASTIC"/>
    <property type="match status" value="1"/>
</dbReference>
<dbReference type="PANTHER" id="PTHR31756:SF3">
    <property type="entry name" value="PYRUVATE, PHOSPHATE DIKINASE REGULATORY PROTEIN 1, CHLOROPLASTIC"/>
    <property type="match status" value="1"/>
</dbReference>
<dbReference type="Pfam" id="PF03618">
    <property type="entry name" value="Kinase-PPPase"/>
    <property type="match status" value="1"/>
</dbReference>
<feature type="chain" id="PRO_0000316660" description="Putative pyruvate, phosphate dikinase regulatory protein">
    <location>
        <begin position="1"/>
        <end position="269"/>
    </location>
</feature>
<feature type="binding site" evidence="1">
    <location>
        <begin position="147"/>
        <end position="154"/>
    </location>
    <ligand>
        <name>ADP</name>
        <dbReference type="ChEBI" id="CHEBI:456216"/>
    </ligand>
</feature>
<keyword id="KW-0418">Kinase</keyword>
<keyword id="KW-0547">Nucleotide-binding</keyword>
<keyword id="KW-0723">Serine/threonine-protein kinase</keyword>
<keyword id="KW-0808">Transferase</keyword>
<organism>
    <name type="scientific">Clostridium botulinum (strain ATCC 19397 / Type A)</name>
    <dbReference type="NCBI Taxonomy" id="441770"/>
    <lineage>
        <taxon>Bacteria</taxon>
        <taxon>Bacillati</taxon>
        <taxon>Bacillota</taxon>
        <taxon>Clostridia</taxon>
        <taxon>Eubacteriales</taxon>
        <taxon>Clostridiaceae</taxon>
        <taxon>Clostridium</taxon>
    </lineage>
</organism>
<sequence>MFKIYAVSDSIGETAEQVANATAYQFGSSVKVERVPYVKTFEDVNNLISIIKNPNEAMIISTIVLVDIREFLVQRCVESGIHISNVLGPCISLVSTILNKTPEYKPGAVWDMDKKYYKKIEAMEFAIRYDDSKDHSGIKHADIVLIGLSRTSKTPLSIYLANKGIKALNIPLMPEVPVPEELFEIDRKKIIGLTIDPMHLIEIRRHRVDNMMKIPTELKYANAERVLDELEFADKIMRKLKCKVIDVTKRAIEDTALIIMESVFSDRII</sequence>
<evidence type="ECO:0000255" key="1">
    <source>
        <dbReference type="HAMAP-Rule" id="MF_00921"/>
    </source>
</evidence>